<gene>
    <name evidence="1" type="primary">rplL</name>
    <name type="ordered locus">Fnod_1783</name>
</gene>
<comment type="function">
    <text evidence="1">Forms part of the ribosomal stalk which helps the ribosome interact with GTP-bound translation factors. Is thus essential for accurate translation.</text>
</comment>
<comment type="subunit">
    <text evidence="1">Homodimer. Part of the ribosomal stalk of the 50S ribosomal subunit. Forms a multimeric L10(L12)X complex, where L10 forms an elongated spine to which 2 to 4 L12 dimers bind in a sequential fashion. Binds GTP-bound translation factors.</text>
</comment>
<comment type="similarity">
    <text evidence="1">Belongs to the bacterial ribosomal protein bL12 family.</text>
</comment>
<name>RL7_FERNB</name>
<keyword id="KW-1185">Reference proteome</keyword>
<keyword id="KW-0687">Ribonucleoprotein</keyword>
<keyword id="KW-0689">Ribosomal protein</keyword>
<proteinExistence type="inferred from homology"/>
<dbReference type="EMBL" id="CP000771">
    <property type="protein sequence ID" value="ABS61616.1"/>
    <property type="molecule type" value="Genomic_DNA"/>
</dbReference>
<dbReference type="RefSeq" id="WP_011994907.1">
    <property type="nucleotide sequence ID" value="NC_009718.1"/>
</dbReference>
<dbReference type="SMR" id="A7HNY3"/>
<dbReference type="STRING" id="381764.Fnod_1783"/>
<dbReference type="KEGG" id="fno:Fnod_1783"/>
<dbReference type="eggNOG" id="COG0222">
    <property type="taxonomic scope" value="Bacteria"/>
</dbReference>
<dbReference type="HOGENOM" id="CLU_086499_3_2_0"/>
<dbReference type="Proteomes" id="UP000002415">
    <property type="component" value="Chromosome"/>
</dbReference>
<dbReference type="GO" id="GO:0022625">
    <property type="term" value="C:cytosolic large ribosomal subunit"/>
    <property type="evidence" value="ECO:0007669"/>
    <property type="project" value="TreeGrafter"/>
</dbReference>
<dbReference type="GO" id="GO:0003729">
    <property type="term" value="F:mRNA binding"/>
    <property type="evidence" value="ECO:0007669"/>
    <property type="project" value="TreeGrafter"/>
</dbReference>
<dbReference type="GO" id="GO:0003735">
    <property type="term" value="F:structural constituent of ribosome"/>
    <property type="evidence" value="ECO:0007669"/>
    <property type="project" value="InterPro"/>
</dbReference>
<dbReference type="GO" id="GO:0006412">
    <property type="term" value="P:translation"/>
    <property type="evidence" value="ECO:0007669"/>
    <property type="project" value="UniProtKB-UniRule"/>
</dbReference>
<dbReference type="CDD" id="cd00387">
    <property type="entry name" value="Ribosomal_L7_L12"/>
    <property type="match status" value="1"/>
</dbReference>
<dbReference type="FunFam" id="3.30.1390.10:FF:000001">
    <property type="entry name" value="50S ribosomal protein L7/L12"/>
    <property type="match status" value="1"/>
</dbReference>
<dbReference type="Gene3D" id="3.30.1390.10">
    <property type="match status" value="1"/>
</dbReference>
<dbReference type="Gene3D" id="1.20.5.710">
    <property type="entry name" value="Single helix bin"/>
    <property type="match status" value="1"/>
</dbReference>
<dbReference type="HAMAP" id="MF_00368">
    <property type="entry name" value="Ribosomal_bL12"/>
    <property type="match status" value="1"/>
</dbReference>
<dbReference type="InterPro" id="IPR000206">
    <property type="entry name" value="Ribosomal_bL12"/>
</dbReference>
<dbReference type="InterPro" id="IPR013823">
    <property type="entry name" value="Ribosomal_bL12_C"/>
</dbReference>
<dbReference type="InterPro" id="IPR014719">
    <property type="entry name" value="Ribosomal_bL12_C/ClpS-like"/>
</dbReference>
<dbReference type="InterPro" id="IPR008932">
    <property type="entry name" value="Ribosomal_bL12_oligo"/>
</dbReference>
<dbReference type="InterPro" id="IPR036235">
    <property type="entry name" value="Ribosomal_bL12_oligo_N_sf"/>
</dbReference>
<dbReference type="NCBIfam" id="TIGR00855">
    <property type="entry name" value="L12"/>
    <property type="match status" value="1"/>
</dbReference>
<dbReference type="PANTHER" id="PTHR45987">
    <property type="entry name" value="39S RIBOSOMAL PROTEIN L12"/>
    <property type="match status" value="1"/>
</dbReference>
<dbReference type="PANTHER" id="PTHR45987:SF4">
    <property type="entry name" value="LARGE RIBOSOMAL SUBUNIT PROTEIN BL12M"/>
    <property type="match status" value="1"/>
</dbReference>
<dbReference type="Pfam" id="PF00542">
    <property type="entry name" value="Ribosomal_L12"/>
    <property type="match status" value="1"/>
</dbReference>
<dbReference type="Pfam" id="PF16320">
    <property type="entry name" value="Ribosomal_L12_N"/>
    <property type="match status" value="1"/>
</dbReference>
<dbReference type="SUPFAM" id="SSF54736">
    <property type="entry name" value="ClpS-like"/>
    <property type="match status" value="1"/>
</dbReference>
<dbReference type="SUPFAM" id="SSF48300">
    <property type="entry name" value="Ribosomal protein L7/12, oligomerisation (N-terminal) domain"/>
    <property type="match status" value="1"/>
</dbReference>
<evidence type="ECO:0000255" key="1">
    <source>
        <dbReference type="HAMAP-Rule" id="MF_00368"/>
    </source>
</evidence>
<evidence type="ECO:0000305" key="2"/>
<accession>A7HNY3</accession>
<sequence>MTLEELVKAIEGLTVAELAELVKMLEERFGVSAAAPVMAAMPVAGAAAPSAAAAEEKDSFDVLLKSFGAKKVEVIKVVREITGLGLKEAKDLVEKAGAADAFIKQGVKKEEAEEIKKKITEVGGEVEIK</sequence>
<organism>
    <name type="scientific">Fervidobacterium nodosum (strain ATCC 35602 / DSM 5306 / Rt17-B1)</name>
    <dbReference type="NCBI Taxonomy" id="381764"/>
    <lineage>
        <taxon>Bacteria</taxon>
        <taxon>Thermotogati</taxon>
        <taxon>Thermotogota</taxon>
        <taxon>Thermotogae</taxon>
        <taxon>Thermotogales</taxon>
        <taxon>Fervidobacteriaceae</taxon>
        <taxon>Fervidobacterium</taxon>
    </lineage>
</organism>
<reference key="1">
    <citation type="submission" date="2007-07" db="EMBL/GenBank/DDBJ databases">
        <title>Complete sequence of Fervidobacterium nodosum Rt17-B1.</title>
        <authorList>
            <consortium name="US DOE Joint Genome Institute"/>
            <person name="Copeland A."/>
            <person name="Lucas S."/>
            <person name="Lapidus A."/>
            <person name="Barry K."/>
            <person name="Glavina del Rio T."/>
            <person name="Dalin E."/>
            <person name="Tice H."/>
            <person name="Pitluck S."/>
            <person name="Saunders E."/>
            <person name="Brettin T."/>
            <person name="Bruce D."/>
            <person name="Detter J.C."/>
            <person name="Han C."/>
            <person name="Schmutz J."/>
            <person name="Larimer F."/>
            <person name="Land M."/>
            <person name="Hauser L."/>
            <person name="Kyrpides N."/>
            <person name="Mikhailova N."/>
            <person name="Nelson K."/>
            <person name="Gogarten J.P."/>
            <person name="Noll K."/>
            <person name="Richardson P."/>
        </authorList>
    </citation>
    <scope>NUCLEOTIDE SEQUENCE [LARGE SCALE GENOMIC DNA]</scope>
    <source>
        <strain>ATCC 35602 / DSM 5306 / Rt17-B1</strain>
    </source>
</reference>
<protein>
    <recommendedName>
        <fullName evidence="1">Large ribosomal subunit protein bL12</fullName>
    </recommendedName>
    <alternativeName>
        <fullName evidence="2">50S ribosomal protein L7/L12</fullName>
    </alternativeName>
</protein>
<feature type="chain" id="PRO_1000072114" description="Large ribosomal subunit protein bL12">
    <location>
        <begin position="1"/>
        <end position="129"/>
    </location>
</feature>